<organism>
    <name type="scientific">Vibrio vulnificus (strain YJ016)</name>
    <dbReference type="NCBI Taxonomy" id="196600"/>
    <lineage>
        <taxon>Bacteria</taxon>
        <taxon>Pseudomonadati</taxon>
        <taxon>Pseudomonadota</taxon>
        <taxon>Gammaproteobacteria</taxon>
        <taxon>Vibrionales</taxon>
        <taxon>Vibrionaceae</taxon>
        <taxon>Vibrio</taxon>
    </lineage>
</organism>
<reference key="1">
    <citation type="journal article" date="2003" name="Genome Res.">
        <title>Comparative genome analysis of Vibrio vulnificus, a marine pathogen.</title>
        <authorList>
            <person name="Chen C.-Y."/>
            <person name="Wu K.-M."/>
            <person name="Chang Y.-C."/>
            <person name="Chang C.-H."/>
            <person name="Tsai H.-C."/>
            <person name="Liao T.-L."/>
            <person name="Liu Y.-M."/>
            <person name="Chen H.-J."/>
            <person name="Shen A.B.-T."/>
            <person name="Li J.-C."/>
            <person name="Su T.-L."/>
            <person name="Shao C.-P."/>
            <person name="Lee C.-T."/>
            <person name="Hor L.-I."/>
            <person name="Tsai S.-F."/>
        </authorList>
    </citation>
    <scope>NUCLEOTIDE SEQUENCE [LARGE SCALE GENOMIC DNA]</scope>
    <source>
        <strain>YJ016</strain>
    </source>
</reference>
<accession>Q7MBQ5</accession>
<dbReference type="EC" id="3.1.1.61" evidence="1"/>
<dbReference type="EC" id="3.5.1.44" evidence="1"/>
<dbReference type="EMBL" id="BA000038">
    <property type="protein sequence ID" value="BAC97711.1"/>
    <property type="molecule type" value="Genomic_DNA"/>
</dbReference>
<dbReference type="SMR" id="Q7MBQ5"/>
<dbReference type="STRING" id="672.VV93_v1c45430"/>
<dbReference type="KEGG" id="vvy:VVA1685"/>
<dbReference type="eggNOG" id="COG2201">
    <property type="taxonomic scope" value="Bacteria"/>
</dbReference>
<dbReference type="HOGENOM" id="CLU_000445_51_0_6"/>
<dbReference type="Proteomes" id="UP000002675">
    <property type="component" value="Chromosome II"/>
</dbReference>
<dbReference type="GO" id="GO:0005737">
    <property type="term" value="C:cytoplasm"/>
    <property type="evidence" value="ECO:0007669"/>
    <property type="project" value="UniProtKB-SubCell"/>
</dbReference>
<dbReference type="GO" id="GO:0000156">
    <property type="term" value="F:phosphorelay response regulator activity"/>
    <property type="evidence" value="ECO:0007669"/>
    <property type="project" value="InterPro"/>
</dbReference>
<dbReference type="GO" id="GO:0008984">
    <property type="term" value="F:protein-glutamate methylesterase activity"/>
    <property type="evidence" value="ECO:0007669"/>
    <property type="project" value="UniProtKB-UniRule"/>
</dbReference>
<dbReference type="GO" id="GO:0050568">
    <property type="term" value="F:protein-glutamine glutaminase activity"/>
    <property type="evidence" value="ECO:0007669"/>
    <property type="project" value="UniProtKB-UniRule"/>
</dbReference>
<dbReference type="GO" id="GO:0006935">
    <property type="term" value="P:chemotaxis"/>
    <property type="evidence" value="ECO:0007669"/>
    <property type="project" value="UniProtKB-UniRule"/>
</dbReference>
<dbReference type="CDD" id="cd16432">
    <property type="entry name" value="CheB_Rec"/>
    <property type="match status" value="1"/>
</dbReference>
<dbReference type="CDD" id="cd17541">
    <property type="entry name" value="REC_CheB-like"/>
    <property type="match status" value="1"/>
</dbReference>
<dbReference type="Gene3D" id="3.40.50.2300">
    <property type="match status" value="1"/>
</dbReference>
<dbReference type="Gene3D" id="3.40.50.180">
    <property type="entry name" value="Methylesterase CheB, C-terminal domain"/>
    <property type="match status" value="1"/>
</dbReference>
<dbReference type="HAMAP" id="MF_00099">
    <property type="entry name" value="CheB_chemtxs"/>
    <property type="match status" value="1"/>
</dbReference>
<dbReference type="InterPro" id="IPR008248">
    <property type="entry name" value="CheB-like"/>
</dbReference>
<dbReference type="InterPro" id="IPR035909">
    <property type="entry name" value="CheB_C"/>
</dbReference>
<dbReference type="InterPro" id="IPR011006">
    <property type="entry name" value="CheY-like_superfamily"/>
</dbReference>
<dbReference type="InterPro" id="IPR000673">
    <property type="entry name" value="Sig_transdc_resp-reg_Me-estase"/>
</dbReference>
<dbReference type="InterPro" id="IPR001789">
    <property type="entry name" value="Sig_transdc_resp-reg_receiver"/>
</dbReference>
<dbReference type="NCBIfam" id="NF001965">
    <property type="entry name" value="PRK00742.1"/>
    <property type="match status" value="1"/>
</dbReference>
<dbReference type="NCBIfam" id="NF009206">
    <property type="entry name" value="PRK12555.1"/>
    <property type="match status" value="1"/>
</dbReference>
<dbReference type="PANTHER" id="PTHR42872">
    <property type="entry name" value="PROTEIN-GLUTAMATE METHYLESTERASE/PROTEIN-GLUTAMINE GLUTAMINASE"/>
    <property type="match status" value="1"/>
</dbReference>
<dbReference type="PANTHER" id="PTHR42872:SF6">
    <property type="entry name" value="PROTEIN-GLUTAMATE METHYLESTERASE_PROTEIN-GLUTAMINE GLUTAMINASE"/>
    <property type="match status" value="1"/>
</dbReference>
<dbReference type="Pfam" id="PF01339">
    <property type="entry name" value="CheB_methylest"/>
    <property type="match status" value="1"/>
</dbReference>
<dbReference type="Pfam" id="PF00072">
    <property type="entry name" value="Response_reg"/>
    <property type="match status" value="1"/>
</dbReference>
<dbReference type="PIRSF" id="PIRSF000876">
    <property type="entry name" value="RR_chemtxs_CheB"/>
    <property type="match status" value="1"/>
</dbReference>
<dbReference type="SMART" id="SM00448">
    <property type="entry name" value="REC"/>
    <property type="match status" value="1"/>
</dbReference>
<dbReference type="SUPFAM" id="SSF52172">
    <property type="entry name" value="CheY-like"/>
    <property type="match status" value="1"/>
</dbReference>
<dbReference type="SUPFAM" id="SSF52738">
    <property type="entry name" value="Methylesterase CheB, C-terminal domain"/>
    <property type="match status" value="1"/>
</dbReference>
<dbReference type="PROSITE" id="PS50122">
    <property type="entry name" value="CHEB"/>
    <property type="match status" value="1"/>
</dbReference>
<dbReference type="PROSITE" id="PS50110">
    <property type="entry name" value="RESPONSE_REGULATORY"/>
    <property type="match status" value="1"/>
</dbReference>
<feature type="chain" id="PRO_0000158042" description="Protein-glutamate methylesterase/protein-glutamine glutaminase 2">
    <location>
        <begin position="1"/>
        <end position="345"/>
    </location>
</feature>
<feature type="domain" description="Response regulatory" evidence="1">
    <location>
        <begin position="7"/>
        <end position="124"/>
    </location>
</feature>
<feature type="domain" description="CheB-type methylesterase" evidence="1">
    <location>
        <begin position="154"/>
        <end position="345"/>
    </location>
</feature>
<feature type="active site" evidence="1">
    <location>
        <position position="166"/>
    </location>
</feature>
<feature type="active site" evidence="1">
    <location>
        <position position="192"/>
    </location>
</feature>
<feature type="active site" evidence="1">
    <location>
        <position position="289"/>
    </location>
</feature>
<feature type="modified residue" description="4-aspartylphosphate" evidence="1">
    <location>
        <position position="58"/>
    </location>
</feature>
<gene>
    <name evidence="1" type="primary">cheB2</name>
    <name type="ordered locus">VVA1685</name>
</gene>
<evidence type="ECO:0000255" key="1">
    <source>
        <dbReference type="HAMAP-Rule" id="MF_00099"/>
    </source>
</evidence>
<name>CHEB2_VIBVY</name>
<sequence>MMSKKMKVLVVDDSPVFRALLSEIINSDPQLEVIGAAEDPYQAREMIKALKPDVLTLDIEMPKMNGVQFLKNLMRLHPLPVVMISTLTQHGADATLMALELGAVDYFPKPSVANTADMLGYRSLVNEKIRMAAQAQVGANQSMSPAVASSSAVSTSQYQLIAIGASTGGTEAVKHLLSALPASMPPIVITQHISAMFSGPFASRLDASCALSVSELTQGEVALKANHAYVAPGDKHLMVFRRGGQLYAHLDDSPAVNRHKPSVDVMFGSVAESLKGKAIGVILTGMGKDGAQGMLQMKQQGAITVAQDEQSCVVYGMPRAAVECGAAMHIKPLNKLPQFLCDLLS</sequence>
<comment type="function">
    <text evidence="1">Involved in chemotaxis. Part of a chemotaxis signal transduction system that modulates chemotaxis in response to various stimuli. Catalyzes the demethylation of specific methylglutamate residues introduced into the chemoreceptors (methyl-accepting chemotaxis proteins or MCP) by CheR. Also mediates the irreversible deamidation of specific glutamine residues to glutamic acid.</text>
</comment>
<comment type="catalytic activity">
    <reaction evidence="1">
        <text>[protein]-L-glutamate 5-O-methyl ester + H2O = L-glutamyl-[protein] + methanol + H(+)</text>
        <dbReference type="Rhea" id="RHEA:23236"/>
        <dbReference type="Rhea" id="RHEA-COMP:10208"/>
        <dbReference type="Rhea" id="RHEA-COMP:10311"/>
        <dbReference type="ChEBI" id="CHEBI:15377"/>
        <dbReference type="ChEBI" id="CHEBI:15378"/>
        <dbReference type="ChEBI" id="CHEBI:17790"/>
        <dbReference type="ChEBI" id="CHEBI:29973"/>
        <dbReference type="ChEBI" id="CHEBI:82795"/>
        <dbReference type="EC" id="3.1.1.61"/>
    </reaction>
</comment>
<comment type="catalytic activity">
    <reaction evidence="1">
        <text>L-glutaminyl-[protein] + H2O = L-glutamyl-[protein] + NH4(+)</text>
        <dbReference type="Rhea" id="RHEA:16441"/>
        <dbReference type="Rhea" id="RHEA-COMP:10207"/>
        <dbReference type="Rhea" id="RHEA-COMP:10208"/>
        <dbReference type="ChEBI" id="CHEBI:15377"/>
        <dbReference type="ChEBI" id="CHEBI:28938"/>
        <dbReference type="ChEBI" id="CHEBI:29973"/>
        <dbReference type="ChEBI" id="CHEBI:30011"/>
        <dbReference type="EC" id="3.5.1.44"/>
    </reaction>
</comment>
<comment type="subcellular location">
    <subcellularLocation>
        <location evidence="1">Cytoplasm</location>
    </subcellularLocation>
</comment>
<comment type="domain">
    <text evidence="1">Contains a C-terminal catalytic domain, and an N-terminal region which modulates catalytic activity.</text>
</comment>
<comment type="PTM">
    <text evidence="1">Phosphorylated by CheA. Phosphorylation of the N-terminal regulatory domain activates the methylesterase activity.</text>
</comment>
<comment type="similarity">
    <text evidence="1">Belongs to the CheB family.</text>
</comment>
<keyword id="KW-0145">Chemotaxis</keyword>
<keyword id="KW-0963">Cytoplasm</keyword>
<keyword id="KW-0378">Hydrolase</keyword>
<keyword id="KW-0597">Phosphoprotein</keyword>
<proteinExistence type="inferred from homology"/>
<protein>
    <recommendedName>
        <fullName evidence="1">Protein-glutamate methylesterase/protein-glutamine glutaminase 2</fullName>
        <ecNumber evidence="1">3.1.1.61</ecNumber>
        <ecNumber evidence="1">3.5.1.44</ecNumber>
    </recommendedName>
</protein>